<feature type="chain" id="PRO_0000368247" description="Cytoplasmic tRNA 2-thiolation protein 1">
    <location>
        <begin position="1"/>
        <end position="343"/>
    </location>
</feature>
<comment type="function">
    <text evidence="1">Plays a central role in 2-thiolation of mcm(5)S(2)U at tRNA wobble positions of tRNA(Lys), tRNA(Glu) and tRNA(Gln). Directly binds tRNAs and probably acts by catalyzing adenylation of tRNAs, an intermediate required for 2-thiolation. It is unclear whether it acts as a sulfurtransferase that transfers sulfur from thiocarboxylated URM1 onto the uridine of tRNAs at wobble position.</text>
</comment>
<comment type="pathway">
    <text evidence="1">tRNA modification; 5-methoxycarbonylmethyl-2-thiouridine-tRNA biosynthesis.</text>
</comment>
<comment type="subcellular location">
    <subcellularLocation>
        <location evidence="1">Cytoplasm</location>
    </subcellularLocation>
</comment>
<comment type="similarity">
    <text evidence="1">Belongs to the TtcA family. CTU1/NCS6/ATPBD3 subfamily.</text>
</comment>
<organism>
    <name type="scientific">Drosophila erecta</name>
    <name type="common">Fruit fly</name>
    <dbReference type="NCBI Taxonomy" id="7220"/>
    <lineage>
        <taxon>Eukaryota</taxon>
        <taxon>Metazoa</taxon>
        <taxon>Ecdysozoa</taxon>
        <taxon>Arthropoda</taxon>
        <taxon>Hexapoda</taxon>
        <taxon>Insecta</taxon>
        <taxon>Pterygota</taxon>
        <taxon>Neoptera</taxon>
        <taxon>Endopterygota</taxon>
        <taxon>Diptera</taxon>
        <taxon>Brachycera</taxon>
        <taxon>Muscomorpha</taxon>
        <taxon>Ephydroidea</taxon>
        <taxon>Drosophilidae</taxon>
        <taxon>Drosophila</taxon>
        <taxon>Sophophora</taxon>
    </lineage>
</organism>
<sequence>MPINCKSQCGNRAALKRPKTGDALCKECFFAAFEAEIHHTISSSNLFRRGEKVAVAASGGKDSTVLAHVLKLLNERHNYGLELVLLSIDEGITGYRDDSLETVKQNRDDYQMPLKILSYEELYGWTMDRIVAQIGRSNNCTFCGVFRRQALDRGAKLLGVDSIATGHNADDIAETVLMNVLRGDTARLRRCTSIRTGGGEDTIPRVKPLKYSYEKEIVMYAHYKKLVYFSTECVFAPNAYRGHARAFLKDLEKVRPSVIMDIIYSGEQLRFKDTVKKPERGICTRCGFVSSQQPCKACVLLEGLNRGLPKLGIGKKSKGERMIAKQDQELALRERANLVKNDF</sequence>
<protein>
    <recommendedName>
        <fullName evidence="1">Cytoplasmic tRNA 2-thiolation protein 1</fullName>
        <ecNumber evidence="1">2.7.7.-</ecNumber>
    </recommendedName>
    <alternativeName>
        <fullName evidence="1">Cytoplasmic tRNA adenylyltransferase 1</fullName>
    </alternativeName>
</protein>
<evidence type="ECO:0000255" key="1">
    <source>
        <dbReference type="HAMAP-Rule" id="MF_03053"/>
    </source>
</evidence>
<reference key="1">
    <citation type="journal article" date="2007" name="Nature">
        <title>Evolution of genes and genomes on the Drosophila phylogeny.</title>
        <authorList>
            <consortium name="Drosophila 12 genomes consortium"/>
        </authorList>
    </citation>
    <scope>NUCLEOTIDE SEQUENCE [LARGE SCALE GENOMIC DNA]</scope>
    <source>
        <strain>Tucson 14021-0224.01</strain>
    </source>
</reference>
<proteinExistence type="inferred from homology"/>
<keyword id="KW-0963">Cytoplasm</keyword>
<keyword id="KW-0694">RNA-binding</keyword>
<keyword id="KW-0808">Transferase</keyword>
<keyword id="KW-0819">tRNA processing</keyword>
<keyword id="KW-0820">tRNA-binding</keyword>
<accession>B3N7L9</accession>
<gene>
    <name type="ORF">GG10584</name>
</gene>
<dbReference type="EC" id="2.7.7.-" evidence="1"/>
<dbReference type="EMBL" id="CH954177">
    <property type="protein sequence ID" value="EDV59424.1"/>
    <property type="molecule type" value="Genomic_DNA"/>
</dbReference>
<dbReference type="SMR" id="B3N7L9"/>
<dbReference type="EnsemblMetazoa" id="FBtr0130638">
    <property type="protein sequence ID" value="FBpp0129130"/>
    <property type="gene ID" value="FBgn0102892"/>
</dbReference>
<dbReference type="EnsemblMetazoa" id="XM_001970329.3">
    <property type="protein sequence ID" value="XP_001970365.1"/>
    <property type="gene ID" value="LOC6541054"/>
</dbReference>
<dbReference type="GeneID" id="6541054"/>
<dbReference type="KEGG" id="der:6541054"/>
<dbReference type="CTD" id="90353"/>
<dbReference type="eggNOG" id="KOG2840">
    <property type="taxonomic scope" value="Eukaryota"/>
</dbReference>
<dbReference type="HOGENOM" id="CLU_026481_1_2_1"/>
<dbReference type="OMA" id="KPVRGIC"/>
<dbReference type="OrthoDB" id="198857at2759"/>
<dbReference type="PhylomeDB" id="B3N7L9"/>
<dbReference type="UniPathway" id="UPA00988"/>
<dbReference type="Proteomes" id="UP000008711">
    <property type="component" value="Unassembled WGS sequence"/>
</dbReference>
<dbReference type="GO" id="GO:0005829">
    <property type="term" value="C:cytosol"/>
    <property type="evidence" value="ECO:0000250"/>
    <property type="project" value="UniProtKB"/>
</dbReference>
<dbReference type="GO" id="GO:0002144">
    <property type="term" value="C:cytosolic tRNA wobble base thiouridylase complex"/>
    <property type="evidence" value="ECO:0007669"/>
    <property type="project" value="TreeGrafter"/>
</dbReference>
<dbReference type="GO" id="GO:0005739">
    <property type="term" value="C:mitochondrion"/>
    <property type="evidence" value="ECO:0007669"/>
    <property type="project" value="TreeGrafter"/>
</dbReference>
<dbReference type="GO" id="GO:0016779">
    <property type="term" value="F:nucleotidyltransferase activity"/>
    <property type="evidence" value="ECO:0007669"/>
    <property type="project" value="UniProtKB-UniRule"/>
</dbReference>
<dbReference type="GO" id="GO:0000049">
    <property type="term" value="F:tRNA binding"/>
    <property type="evidence" value="ECO:0000250"/>
    <property type="project" value="UniProtKB"/>
</dbReference>
<dbReference type="GO" id="GO:0032447">
    <property type="term" value="P:protein urmylation"/>
    <property type="evidence" value="ECO:0007669"/>
    <property type="project" value="UniProtKB-UniRule"/>
</dbReference>
<dbReference type="GO" id="GO:0034227">
    <property type="term" value="P:tRNA thio-modification"/>
    <property type="evidence" value="ECO:0000250"/>
    <property type="project" value="UniProtKB"/>
</dbReference>
<dbReference type="GO" id="GO:0002143">
    <property type="term" value="P:tRNA wobble position uridine thiolation"/>
    <property type="evidence" value="ECO:0007669"/>
    <property type="project" value="TreeGrafter"/>
</dbReference>
<dbReference type="GO" id="GO:0002098">
    <property type="term" value="P:tRNA wobble uridine modification"/>
    <property type="evidence" value="ECO:0000250"/>
    <property type="project" value="UniProtKB"/>
</dbReference>
<dbReference type="CDD" id="cd01713">
    <property type="entry name" value="CTU1-like"/>
    <property type="match status" value="1"/>
</dbReference>
<dbReference type="FunFam" id="3.40.50.620:FF:000054">
    <property type="entry name" value="Cytoplasmic tRNA 2-thiolation protein 1"/>
    <property type="match status" value="1"/>
</dbReference>
<dbReference type="Gene3D" id="3.40.50.620">
    <property type="entry name" value="HUPs"/>
    <property type="match status" value="1"/>
</dbReference>
<dbReference type="HAMAP" id="MF_03053">
    <property type="entry name" value="CTU1"/>
    <property type="match status" value="1"/>
</dbReference>
<dbReference type="InterPro" id="IPR056369">
    <property type="entry name" value="CTU1-like_ATP-bd"/>
</dbReference>
<dbReference type="InterPro" id="IPR032442">
    <property type="entry name" value="CTU1_C"/>
</dbReference>
<dbReference type="InterPro" id="IPR000541">
    <property type="entry name" value="Ncs6/Tuc1/Ctu1"/>
</dbReference>
<dbReference type="InterPro" id="IPR014729">
    <property type="entry name" value="Rossmann-like_a/b/a_fold"/>
</dbReference>
<dbReference type="InterPro" id="IPR011063">
    <property type="entry name" value="TilS/TtcA_N"/>
</dbReference>
<dbReference type="InterPro" id="IPR035107">
    <property type="entry name" value="tRNA_thiolation_TtcA_Ctu1"/>
</dbReference>
<dbReference type="InterPro" id="IPR020554">
    <property type="entry name" value="UPF0021_CS"/>
</dbReference>
<dbReference type="NCBIfam" id="TIGR00269">
    <property type="entry name" value="TIGR00269 family protein"/>
    <property type="match status" value="1"/>
</dbReference>
<dbReference type="PANTHER" id="PTHR11807">
    <property type="entry name" value="ATPASES OF THE PP SUPERFAMILY-RELATED"/>
    <property type="match status" value="1"/>
</dbReference>
<dbReference type="PANTHER" id="PTHR11807:SF12">
    <property type="entry name" value="CYTOPLASMIC TRNA 2-THIOLATION PROTEIN 1"/>
    <property type="match status" value="1"/>
</dbReference>
<dbReference type="Pfam" id="PF01171">
    <property type="entry name" value="ATP_bind_3"/>
    <property type="match status" value="1"/>
</dbReference>
<dbReference type="Pfam" id="PF16503">
    <property type="entry name" value="zn-ribbon_14"/>
    <property type="match status" value="1"/>
</dbReference>
<dbReference type="PIRSF" id="PIRSF004976">
    <property type="entry name" value="ATPase_YdaO"/>
    <property type="match status" value="1"/>
</dbReference>
<dbReference type="SUPFAM" id="SSF52402">
    <property type="entry name" value="Adenine nucleotide alpha hydrolases-like"/>
    <property type="match status" value="1"/>
</dbReference>
<dbReference type="PROSITE" id="PS01263">
    <property type="entry name" value="UPF0021"/>
    <property type="match status" value="1"/>
</dbReference>
<name>CTU1_DROER</name>